<organism>
    <name type="scientific">Burkholderia pseudomallei (strain K96243)</name>
    <dbReference type="NCBI Taxonomy" id="272560"/>
    <lineage>
        <taxon>Bacteria</taxon>
        <taxon>Pseudomonadati</taxon>
        <taxon>Pseudomonadota</taxon>
        <taxon>Betaproteobacteria</taxon>
        <taxon>Burkholderiales</taxon>
        <taxon>Burkholderiaceae</taxon>
        <taxon>Burkholderia</taxon>
        <taxon>pseudomallei group</taxon>
    </lineage>
</organism>
<protein>
    <recommendedName>
        <fullName evidence="1">4-hydroxybenzoate octaprenyltransferase</fullName>
        <ecNumber evidence="1">2.5.1.39</ecNumber>
    </recommendedName>
    <alternativeName>
        <fullName evidence="1">4-HB polyprenyltransferase</fullName>
    </alternativeName>
</protein>
<feature type="chain" id="PRO_0000262783" description="4-hydroxybenzoate octaprenyltransferase">
    <location>
        <begin position="1"/>
        <end position="287"/>
    </location>
</feature>
<feature type="transmembrane region" description="Helical" evidence="1">
    <location>
        <begin position="30"/>
        <end position="50"/>
    </location>
</feature>
<feature type="transmembrane region" description="Helical" evidence="1">
    <location>
        <begin position="92"/>
        <end position="112"/>
    </location>
</feature>
<feature type="transmembrane region" description="Helical" evidence="1">
    <location>
        <begin position="133"/>
        <end position="153"/>
    </location>
</feature>
<feature type="transmembrane region" description="Helical" evidence="1">
    <location>
        <begin position="158"/>
        <end position="178"/>
    </location>
</feature>
<feature type="transmembrane region" description="Helical" evidence="1">
    <location>
        <begin position="207"/>
        <end position="227"/>
    </location>
</feature>
<feature type="transmembrane region" description="Helical" evidence="1">
    <location>
        <begin position="232"/>
        <end position="252"/>
    </location>
</feature>
<feature type="transmembrane region" description="Helical" evidence="1">
    <location>
        <begin position="266"/>
        <end position="286"/>
    </location>
</feature>
<keyword id="KW-0997">Cell inner membrane</keyword>
<keyword id="KW-1003">Cell membrane</keyword>
<keyword id="KW-0460">Magnesium</keyword>
<keyword id="KW-0472">Membrane</keyword>
<keyword id="KW-1185">Reference proteome</keyword>
<keyword id="KW-0808">Transferase</keyword>
<keyword id="KW-0812">Transmembrane</keyword>
<keyword id="KW-1133">Transmembrane helix</keyword>
<keyword id="KW-0831">Ubiquinone biosynthesis</keyword>
<gene>
    <name evidence="1" type="primary">ubiA</name>
    <name type="ordered locus">BPSL2861</name>
</gene>
<sequence length="287" mass="31688">MLARFPLYLRLIRMDKPIGSLLLLWPTLNALWIASDGHPAPSLVVIFALGTLLMRSAGCAINDYADRDFDRHVKRTAERPLTSGKIRAWEAIAIAVGLALVSFLLILPLNGLTKELSVVAVFVAATYPFMKRFFAIPQAYLGIAFGFGIPMAFAAVQDTVPMIAWAMLAANVFWSVAYDTAYAMVDRDDDLKIGMRTSAITFGRHDVLAIMLCYAAMLGIYVWLGAALHFGWPYWAGWAAAAGCSIYHYTLIKDRERMACFAAFRHNNWLGGVLFAGIAAHYALAVR</sequence>
<dbReference type="EC" id="2.5.1.39" evidence="1"/>
<dbReference type="EMBL" id="BX571965">
    <property type="protein sequence ID" value="CAH36871.1"/>
    <property type="status" value="ALT_INIT"/>
    <property type="molecule type" value="Genomic_DNA"/>
</dbReference>
<dbReference type="RefSeq" id="WP_004194359.1">
    <property type="nucleotide sequence ID" value="NZ_CP009538.1"/>
</dbReference>
<dbReference type="RefSeq" id="YP_109455.1">
    <property type="nucleotide sequence ID" value="NC_006350.1"/>
</dbReference>
<dbReference type="SMR" id="Q63R13"/>
<dbReference type="STRING" id="272560.BPSL2861"/>
<dbReference type="GeneID" id="92980092"/>
<dbReference type="KEGG" id="bps:BPSL2861"/>
<dbReference type="PATRIC" id="fig|272560.51.peg.2439"/>
<dbReference type="eggNOG" id="COG0382">
    <property type="taxonomic scope" value="Bacteria"/>
</dbReference>
<dbReference type="UniPathway" id="UPA00232"/>
<dbReference type="Proteomes" id="UP000000605">
    <property type="component" value="Chromosome 1"/>
</dbReference>
<dbReference type="GO" id="GO:0005886">
    <property type="term" value="C:plasma membrane"/>
    <property type="evidence" value="ECO:0007669"/>
    <property type="project" value="UniProtKB-SubCell"/>
</dbReference>
<dbReference type="GO" id="GO:0008412">
    <property type="term" value="F:4-hydroxybenzoate polyprenyltransferase activity"/>
    <property type="evidence" value="ECO:0007669"/>
    <property type="project" value="UniProtKB-UniRule"/>
</dbReference>
<dbReference type="GO" id="GO:0006744">
    <property type="term" value="P:ubiquinone biosynthetic process"/>
    <property type="evidence" value="ECO:0007669"/>
    <property type="project" value="UniProtKB-UniRule"/>
</dbReference>
<dbReference type="CDD" id="cd13959">
    <property type="entry name" value="PT_UbiA_COQ2"/>
    <property type="match status" value="1"/>
</dbReference>
<dbReference type="FunFam" id="1.10.357.140:FF:000002">
    <property type="entry name" value="4-hydroxybenzoate octaprenyltransferase"/>
    <property type="match status" value="1"/>
</dbReference>
<dbReference type="FunFam" id="1.20.120.1780:FF:000001">
    <property type="entry name" value="4-hydroxybenzoate octaprenyltransferase"/>
    <property type="match status" value="1"/>
</dbReference>
<dbReference type="Gene3D" id="1.10.357.140">
    <property type="entry name" value="UbiA prenyltransferase"/>
    <property type="match status" value="1"/>
</dbReference>
<dbReference type="Gene3D" id="1.20.120.1780">
    <property type="entry name" value="UbiA prenyltransferase"/>
    <property type="match status" value="1"/>
</dbReference>
<dbReference type="HAMAP" id="MF_01635">
    <property type="entry name" value="UbiA"/>
    <property type="match status" value="1"/>
</dbReference>
<dbReference type="InterPro" id="IPR006370">
    <property type="entry name" value="HB_polyprenyltransferase-like"/>
</dbReference>
<dbReference type="InterPro" id="IPR039653">
    <property type="entry name" value="Prenyltransferase"/>
</dbReference>
<dbReference type="InterPro" id="IPR000537">
    <property type="entry name" value="UbiA_prenyltransferase"/>
</dbReference>
<dbReference type="InterPro" id="IPR030470">
    <property type="entry name" value="UbiA_prenylTrfase_CS"/>
</dbReference>
<dbReference type="InterPro" id="IPR044878">
    <property type="entry name" value="UbiA_sf"/>
</dbReference>
<dbReference type="NCBIfam" id="TIGR01474">
    <property type="entry name" value="ubiA_proteo"/>
    <property type="match status" value="1"/>
</dbReference>
<dbReference type="PANTHER" id="PTHR11048:SF28">
    <property type="entry name" value="4-HYDROXYBENZOATE POLYPRENYLTRANSFERASE, MITOCHONDRIAL"/>
    <property type="match status" value="1"/>
</dbReference>
<dbReference type="PANTHER" id="PTHR11048">
    <property type="entry name" value="PRENYLTRANSFERASES"/>
    <property type="match status" value="1"/>
</dbReference>
<dbReference type="Pfam" id="PF01040">
    <property type="entry name" value="UbiA"/>
    <property type="match status" value="1"/>
</dbReference>
<dbReference type="PROSITE" id="PS00943">
    <property type="entry name" value="UBIA"/>
    <property type="match status" value="1"/>
</dbReference>
<accession>Q63R13</accession>
<reference key="1">
    <citation type="journal article" date="2004" name="Proc. Natl. Acad. Sci. U.S.A.">
        <title>Genomic plasticity of the causative agent of melioidosis, Burkholderia pseudomallei.</title>
        <authorList>
            <person name="Holden M.T.G."/>
            <person name="Titball R.W."/>
            <person name="Peacock S.J."/>
            <person name="Cerdeno-Tarraga A.-M."/>
            <person name="Atkins T."/>
            <person name="Crossman L.C."/>
            <person name="Pitt T."/>
            <person name="Churcher C."/>
            <person name="Mungall K.L."/>
            <person name="Bentley S.D."/>
            <person name="Sebaihia M."/>
            <person name="Thomson N.R."/>
            <person name="Bason N."/>
            <person name="Beacham I.R."/>
            <person name="Brooks K."/>
            <person name="Brown K.A."/>
            <person name="Brown N.F."/>
            <person name="Challis G.L."/>
            <person name="Cherevach I."/>
            <person name="Chillingworth T."/>
            <person name="Cronin A."/>
            <person name="Crossett B."/>
            <person name="Davis P."/>
            <person name="DeShazer D."/>
            <person name="Feltwell T."/>
            <person name="Fraser A."/>
            <person name="Hance Z."/>
            <person name="Hauser H."/>
            <person name="Holroyd S."/>
            <person name="Jagels K."/>
            <person name="Keith K.E."/>
            <person name="Maddison M."/>
            <person name="Moule S."/>
            <person name="Price C."/>
            <person name="Quail M.A."/>
            <person name="Rabbinowitsch E."/>
            <person name="Rutherford K."/>
            <person name="Sanders M."/>
            <person name="Simmonds M."/>
            <person name="Songsivilai S."/>
            <person name="Stevens K."/>
            <person name="Tumapa S."/>
            <person name="Vesaratchavest M."/>
            <person name="Whitehead S."/>
            <person name="Yeats C."/>
            <person name="Barrell B.G."/>
            <person name="Oyston P.C.F."/>
            <person name="Parkhill J."/>
        </authorList>
    </citation>
    <scope>NUCLEOTIDE SEQUENCE [LARGE SCALE GENOMIC DNA]</scope>
    <source>
        <strain>K96243</strain>
    </source>
</reference>
<name>UBIA_BURPS</name>
<proteinExistence type="inferred from homology"/>
<comment type="function">
    <text evidence="1">Catalyzes the prenylation of para-hydroxybenzoate (PHB) with an all-trans polyprenyl group. Mediates the second step in the final reaction sequence of ubiquinone-8 (UQ-8) biosynthesis, which is the condensation of the polyisoprenoid side chain with PHB, generating the first membrane-bound Q intermediate 3-octaprenyl-4-hydroxybenzoate.</text>
</comment>
<comment type="catalytic activity">
    <reaction evidence="1">
        <text>all-trans-octaprenyl diphosphate + 4-hydroxybenzoate = 4-hydroxy-3-(all-trans-octaprenyl)benzoate + diphosphate</text>
        <dbReference type="Rhea" id="RHEA:27782"/>
        <dbReference type="ChEBI" id="CHEBI:1617"/>
        <dbReference type="ChEBI" id="CHEBI:17879"/>
        <dbReference type="ChEBI" id="CHEBI:33019"/>
        <dbReference type="ChEBI" id="CHEBI:57711"/>
        <dbReference type="EC" id="2.5.1.39"/>
    </reaction>
</comment>
<comment type="cofactor">
    <cofactor evidence="1">
        <name>Mg(2+)</name>
        <dbReference type="ChEBI" id="CHEBI:18420"/>
    </cofactor>
</comment>
<comment type="pathway">
    <text evidence="1">Cofactor biosynthesis; ubiquinone biosynthesis.</text>
</comment>
<comment type="subcellular location">
    <subcellularLocation>
        <location evidence="1">Cell inner membrane</location>
        <topology evidence="1">Multi-pass membrane protein</topology>
    </subcellularLocation>
</comment>
<comment type="similarity">
    <text evidence="1">Belongs to the UbiA prenyltransferase family.</text>
</comment>
<comment type="sequence caution" evidence="2">
    <conflict type="erroneous initiation">
        <sequence resource="EMBL-CDS" id="CAH36871"/>
    </conflict>
</comment>
<evidence type="ECO:0000255" key="1">
    <source>
        <dbReference type="HAMAP-Rule" id="MF_01635"/>
    </source>
</evidence>
<evidence type="ECO:0000305" key="2"/>